<comment type="similarity">
    <text evidence="1">Belongs to the DNA glycosylase MPG family.</text>
</comment>
<gene>
    <name type="ordered locus">ABC1936</name>
</gene>
<name>3MGH_SHOC1</name>
<feature type="chain" id="PRO_0000264996" description="Putative 3-methyladenine DNA glycosylase">
    <location>
        <begin position="1"/>
        <end position="200"/>
    </location>
</feature>
<evidence type="ECO:0000255" key="1">
    <source>
        <dbReference type="HAMAP-Rule" id="MF_00527"/>
    </source>
</evidence>
<dbReference type="EC" id="3.2.2.-" evidence="1"/>
<dbReference type="EMBL" id="AP006627">
    <property type="protein sequence ID" value="BAD64471.1"/>
    <property type="molecule type" value="Genomic_DNA"/>
</dbReference>
<dbReference type="SMR" id="Q5WGN4"/>
<dbReference type="STRING" id="66692.ABC1936"/>
<dbReference type="KEGG" id="bcl:ABC1936"/>
<dbReference type="eggNOG" id="COG2094">
    <property type="taxonomic scope" value="Bacteria"/>
</dbReference>
<dbReference type="HOGENOM" id="CLU_060471_2_0_9"/>
<dbReference type="OrthoDB" id="9794313at2"/>
<dbReference type="Proteomes" id="UP000001168">
    <property type="component" value="Chromosome"/>
</dbReference>
<dbReference type="GO" id="GO:0003905">
    <property type="term" value="F:alkylbase DNA N-glycosylase activity"/>
    <property type="evidence" value="ECO:0007669"/>
    <property type="project" value="InterPro"/>
</dbReference>
<dbReference type="GO" id="GO:0003677">
    <property type="term" value="F:DNA binding"/>
    <property type="evidence" value="ECO:0007669"/>
    <property type="project" value="InterPro"/>
</dbReference>
<dbReference type="GO" id="GO:0006284">
    <property type="term" value="P:base-excision repair"/>
    <property type="evidence" value="ECO:0007669"/>
    <property type="project" value="InterPro"/>
</dbReference>
<dbReference type="CDD" id="cd00540">
    <property type="entry name" value="AAG"/>
    <property type="match status" value="1"/>
</dbReference>
<dbReference type="FunFam" id="3.10.300.10:FF:000001">
    <property type="entry name" value="Putative 3-methyladenine DNA glycosylase"/>
    <property type="match status" value="1"/>
</dbReference>
<dbReference type="Gene3D" id="3.10.300.10">
    <property type="entry name" value="Methylpurine-DNA glycosylase (MPG)"/>
    <property type="match status" value="1"/>
</dbReference>
<dbReference type="HAMAP" id="MF_00527">
    <property type="entry name" value="3MGH"/>
    <property type="match status" value="1"/>
</dbReference>
<dbReference type="InterPro" id="IPR011034">
    <property type="entry name" value="Formyl_transferase-like_C_sf"/>
</dbReference>
<dbReference type="InterPro" id="IPR003180">
    <property type="entry name" value="MPG"/>
</dbReference>
<dbReference type="InterPro" id="IPR036995">
    <property type="entry name" value="MPG_sf"/>
</dbReference>
<dbReference type="NCBIfam" id="TIGR00567">
    <property type="entry name" value="3mg"/>
    <property type="match status" value="1"/>
</dbReference>
<dbReference type="NCBIfam" id="NF002002">
    <property type="entry name" value="PRK00802.1-2"/>
    <property type="match status" value="1"/>
</dbReference>
<dbReference type="PANTHER" id="PTHR10429">
    <property type="entry name" value="DNA-3-METHYLADENINE GLYCOSYLASE"/>
    <property type="match status" value="1"/>
</dbReference>
<dbReference type="PANTHER" id="PTHR10429:SF0">
    <property type="entry name" value="DNA-3-METHYLADENINE GLYCOSYLASE"/>
    <property type="match status" value="1"/>
</dbReference>
<dbReference type="Pfam" id="PF02245">
    <property type="entry name" value="Pur_DNA_glyco"/>
    <property type="match status" value="1"/>
</dbReference>
<dbReference type="SUPFAM" id="SSF50486">
    <property type="entry name" value="FMT C-terminal domain-like"/>
    <property type="match status" value="1"/>
</dbReference>
<reference key="1">
    <citation type="submission" date="2003-10" db="EMBL/GenBank/DDBJ databases">
        <title>The complete genome sequence of the alkaliphilic Bacillus clausii KSM-K16.</title>
        <authorList>
            <person name="Takaki Y."/>
            <person name="Kageyama Y."/>
            <person name="Shimamura S."/>
            <person name="Suzuki H."/>
            <person name="Nishi S."/>
            <person name="Hatada Y."/>
            <person name="Kawai S."/>
            <person name="Ito S."/>
            <person name="Horikoshi K."/>
        </authorList>
    </citation>
    <scope>NUCLEOTIDE SEQUENCE [LARGE SCALE GENOMIC DNA]</scope>
    <source>
        <strain>KSM-K16</strain>
    </source>
</reference>
<proteinExistence type="inferred from homology"/>
<keyword id="KW-0227">DNA damage</keyword>
<keyword id="KW-0234">DNA repair</keyword>
<keyword id="KW-0378">Hydrolase</keyword>
<keyword id="KW-1185">Reference proteome</keyword>
<accession>Q5WGN4</accession>
<organism>
    <name type="scientific">Shouchella clausii (strain KSM-K16)</name>
    <name type="common">Alkalihalobacillus clausii</name>
    <dbReference type="NCBI Taxonomy" id="66692"/>
    <lineage>
        <taxon>Bacteria</taxon>
        <taxon>Bacillati</taxon>
        <taxon>Bacillota</taxon>
        <taxon>Bacilli</taxon>
        <taxon>Bacillales</taxon>
        <taxon>Bacillaceae</taxon>
        <taxon>Shouchella</taxon>
    </lineage>
</organism>
<protein>
    <recommendedName>
        <fullName evidence="1">Putative 3-methyladenine DNA glycosylase</fullName>
        <ecNumber evidence="1">3.2.2.-</ecNumber>
    </recommendedName>
</protein>
<sequence length="200" mass="22269">MEQQKALDLSFFEQSTIEVAKGLIGMHLVHELDGVTLIGRITETEAYLGVLDRACHSYGRRRTKRTAILYEEAGRCYTYTMHTHCLLNVVCEQKGQPEAVLIRAIEPISGVKEMERLRGKPHTSREFANGPGKLTKAMGITMADYGRLLTEPPLYFAKGDHTNASIVATKRIGIKGAGPCSHHPWRFIDGNSRAVSAYRP</sequence>